<proteinExistence type="evidence at protein level"/>
<keyword id="KW-0002">3D-structure</keyword>
<keyword id="KW-1035">Host cytoplasm</keyword>
<keyword id="KW-1043">Host membrane</keyword>
<keyword id="KW-0426">Late protein</keyword>
<keyword id="KW-0472">Membrane</keyword>
<keyword id="KW-1185">Reference proteome</keyword>
<keyword id="KW-0812">Transmembrane</keyword>
<keyword id="KW-1133">Transmembrane helix</keyword>
<reference key="1">
    <citation type="submission" date="2003-02" db="EMBL/GenBank/DDBJ databases">
        <title>Sequencing of the coding region of Vaccinia-WR to an average 9-fold redundancy and an error rate of 0.16/10kb.</title>
        <authorList>
            <person name="Esposito J.J."/>
            <person name="Frace A.M."/>
            <person name="Sammons S.A."/>
            <person name="Olsen-Rasmussen M."/>
            <person name="Osborne J."/>
            <person name="Wohlhueter R."/>
        </authorList>
    </citation>
    <scope>NUCLEOTIDE SEQUENCE [LARGE SCALE GENOMIC DNA]</scope>
</reference>
<reference key="2">
    <citation type="journal article" date="1986" name="J. Virol.">
        <title>Conserved TAAATG sequence at the transcriptional and translational initiation sites of vaccinia virus late genes deduced by structural and functional analysis of the HindIII H genome fragment.</title>
        <authorList>
            <person name="Rosel J.L."/>
            <person name="Earl P.L."/>
            <person name="Weir J.P."/>
            <person name="Moss B."/>
        </authorList>
    </citation>
    <scope>NUCLEOTIDE SEQUENCE [GENOMIC DNA] OF 1-129</scope>
</reference>
<reference key="3">
    <citation type="journal article" date="2009" name="J. Virol.">
        <title>Vaccinia virus H7 protein contributes to the formation of crescent membrane precursors of immature virions.</title>
        <authorList>
            <person name="Satheshkumar P.S."/>
            <person name="Weisberg A."/>
            <person name="Moss B."/>
        </authorList>
    </citation>
    <scope>FUNCTION</scope>
    <scope>INDUCTION</scope>
    <scope>SUBCELLULAR LOCATION</scope>
</reference>
<reference key="4">
    <citation type="journal article" date="2022" name="Sci. Rep.">
        <title>Vaccinia virus H7-protein is required for the organization of the viral scaffold protein into hexamers.</title>
        <authorList>
            <person name="Tonnemacher S."/>
            <person name="Folly-Klan M."/>
            <person name="Gazi A.D."/>
            <person name="Schaefer S."/>
            <person name="Penard E."/>
            <person name="Eberle R."/>
            <person name="Kunz R."/>
            <person name="Walther P."/>
            <person name="Krijnse Locker J."/>
        </authorList>
    </citation>
    <scope>FUNCTION</scope>
    <scope>MUTAGENESIS OF ARG-109</scope>
</reference>
<reference key="5">
    <citation type="journal article" date="2015" name="J. Virol.">
        <title>Structure-function analysis of vaccinia virus H7 protein reveals a novel phosphoinositide binding fold essential for poxvirus replication.</title>
        <authorList>
            <person name="Kolli S."/>
            <person name="Meng X."/>
            <person name="Wu X."/>
            <person name="Shengjuler D."/>
            <person name="Cameron C.E."/>
            <person name="Xiang Y."/>
            <person name="Deng J."/>
        </authorList>
    </citation>
    <scope>X-RAY CRYSTALLOGRAPHY (2.70 ANGSTROMS)</scope>
    <scope>FUNCTION</scope>
</reference>
<gene>
    <name type="primary">OPG112</name>
    <name type="ordered locus">VACWR105</name>
    <name type="ORF">H7R</name>
</gene>
<organismHost>
    <name type="scientific">Bos taurus</name>
    <name type="common">Bovine</name>
    <dbReference type="NCBI Taxonomy" id="9913"/>
</organismHost>
<comment type="function">
    <text evidence="2 3 4">Contributes to the formation of crescents and immature virions (IV). Interacts with phosphatidylinositol-3-phosphate (PI3P) and phosphatidylinositol-4-phosphate (PI4P) lipids in order to form virion membranes. Mechanistically, mediates proper formation of OPG125-hexamers, and hence the honey comb lattice and spherical immature virus (PubMed:35906465).</text>
</comment>
<comment type="subcellular location">
    <subcellularLocation>
        <location evidence="5">Host membrane</location>
        <topology evidence="5">Single-pass membrane protein</topology>
    </subcellularLocation>
    <subcellularLocation>
        <location evidence="2">Host cytoplasm</location>
    </subcellularLocation>
    <text>Probably transitorily part of the membrane of crescents during immature virions formation. Not incorporated into virions. Probably synthesized, but not retained in viral factories.</text>
</comment>
<comment type="induction">
    <text evidence="2">Expressed in the late phase of the viral replicative cycle.</text>
</comment>
<comment type="similarity">
    <text evidence="5">Belongs to the orthopoxvirus OPG112 family.</text>
</comment>
<name>PG112_VACCW</name>
<protein>
    <recommendedName>
        <fullName>Late protein OPG112</fullName>
    </recommendedName>
    <alternativeName>
        <fullName>Protein H8</fullName>
    </alternativeName>
</protein>
<sequence length="146" mass="16932">MEMDKRMKSLAMTAFFGELSTLDIMALIMSIFKRHPNNTIFSVDKDGQFMIDFEYDNYKASQYLDLTLTPISGDECKTHASSIAEQLACVDIIKEDISEYIKTTPRLKRFIKKYRNRSDTRISRDTEKLKIALAKGIDYEYIKDAC</sequence>
<accession>P08586</accession>
<accession>Q80HW1</accession>
<organism>
    <name type="scientific">Vaccinia virus (strain Western Reserve)</name>
    <name type="common">VACV</name>
    <name type="synonym">Vaccinia virus (strain WR)</name>
    <dbReference type="NCBI Taxonomy" id="10254"/>
    <lineage>
        <taxon>Viruses</taxon>
        <taxon>Varidnaviria</taxon>
        <taxon>Bamfordvirae</taxon>
        <taxon>Nucleocytoviricota</taxon>
        <taxon>Pokkesviricetes</taxon>
        <taxon>Chitovirales</taxon>
        <taxon>Poxviridae</taxon>
        <taxon>Chordopoxvirinae</taxon>
        <taxon>Orthopoxvirus</taxon>
        <taxon>Vaccinia virus</taxon>
    </lineage>
</organism>
<evidence type="ECO:0000255" key="1"/>
<evidence type="ECO:0000269" key="2">
    <source>
    </source>
</evidence>
<evidence type="ECO:0000269" key="3">
    <source>
    </source>
</evidence>
<evidence type="ECO:0000269" key="4">
    <source>
    </source>
</evidence>
<evidence type="ECO:0000305" key="5"/>
<evidence type="ECO:0007829" key="6">
    <source>
        <dbReference type="PDB" id="4W5X"/>
    </source>
</evidence>
<feature type="chain" id="PRO_0000099553" description="Late protein OPG112">
    <location>
        <begin position="1"/>
        <end position="146"/>
    </location>
</feature>
<feature type="transmembrane region" description="Helical" evidence="1">
    <location>
        <begin position="10"/>
        <end position="32"/>
    </location>
</feature>
<feature type="mutagenesis site" description="Loss of viral membrane assembly." evidence="4">
    <original>R</original>
    <variation>E</variation>
    <location>
        <position position="109"/>
    </location>
</feature>
<feature type="sequence conflict" description="In Ref. 2; AAB59843." evidence="5" ref="2">
    <original>M</original>
    <variation>V</variation>
    <location>
        <position position="29"/>
    </location>
</feature>
<feature type="helix" evidence="6">
    <location>
        <begin position="5"/>
        <end position="12"/>
    </location>
</feature>
<feature type="turn" evidence="6">
    <location>
        <begin position="13"/>
        <end position="18"/>
    </location>
</feature>
<feature type="helix" evidence="6">
    <location>
        <begin position="21"/>
        <end position="32"/>
    </location>
</feature>
<feature type="strand" evidence="6">
    <location>
        <begin position="37"/>
        <end position="43"/>
    </location>
</feature>
<feature type="strand" evidence="6">
    <location>
        <begin position="49"/>
        <end position="54"/>
    </location>
</feature>
<feature type="helix" evidence="6">
    <location>
        <begin position="60"/>
        <end position="64"/>
    </location>
</feature>
<feature type="helix" evidence="6">
    <location>
        <begin position="75"/>
        <end position="78"/>
    </location>
</feature>
<feature type="helix" evidence="6">
    <location>
        <begin position="80"/>
        <end position="95"/>
    </location>
</feature>
<feature type="helix" evidence="6">
    <location>
        <begin position="97"/>
        <end position="102"/>
    </location>
</feature>
<feature type="helix" evidence="6">
    <location>
        <begin position="105"/>
        <end position="114"/>
    </location>
</feature>
<dbReference type="EMBL" id="AY243312">
    <property type="protein sequence ID" value="AAO89384.1"/>
    <property type="molecule type" value="Genomic_DNA"/>
</dbReference>
<dbReference type="EMBL" id="M13209">
    <property type="protein sequence ID" value="AAB59843.1"/>
    <property type="molecule type" value="Genomic_DNA"/>
</dbReference>
<dbReference type="PIR" id="H24481">
    <property type="entry name" value="QQVZH8"/>
</dbReference>
<dbReference type="RefSeq" id="YP_232987.1">
    <property type="nucleotide sequence ID" value="NC_006998.1"/>
</dbReference>
<dbReference type="PDB" id="4W5X">
    <property type="method" value="X-ray"/>
    <property type="resolution" value="2.00 A"/>
    <property type="chains" value="A/B=1-118"/>
</dbReference>
<dbReference type="PDB" id="4W60">
    <property type="method" value="X-ray"/>
    <property type="resolution" value="2.70 A"/>
    <property type="chains" value="A/B/C/D=1-146"/>
</dbReference>
<dbReference type="PDBsum" id="4W5X"/>
<dbReference type="PDBsum" id="4W60"/>
<dbReference type="SMR" id="P08586"/>
<dbReference type="DNASU" id="3707561"/>
<dbReference type="GeneID" id="3707561"/>
<dbReference type="KEGG" id="vg:3707561"/>
<dbReference type="EvolutionaryTrace" id="P08586"/>
<dbReference type="Proteomes" id="UP000000344">
    <property type="component" value="Genome"/>
</dbReference>
<dbReference type="GO" id="GO:0030430">
    <property type="term" value="C:host cell cytoplasm"/>
    <property type="evidence" value="ECO:0007669"/>
    <property type="project" value="UniProtKB-SubCell"/>
</dbReference>
<dbReference type="GO" id="GO:0033644">
    <property type="term" value="C:host cell membrane"/>
    <property type="evidence" value="ECO:0007669"/>
    <property type="project" value="UniProtKB-SubCell"/>
</dbReference>
<dbReference type="GO" id="GO:0016020">
    <property type="term" value="C:membrane"/>
    <property type="evidence" value="ECO:0007669"/>
    <property type="project" value="UniProtKB-KW"/>
</dbReference>
<dbReference type="InterPro" id="IPR006872">
    <property type="entry name" value="Poxvirus_H7"/>
</dbReference>
<dbReference type="Pfam" id="PF04787">
    <property type="entry name" value="Pox_H7"/>
    <property type="match status" value="1"/>
</dbReference>